<proteinExistence type="evidence at protein level"/>
<feature type="chain" id="PRO_0000460466" description="Actin depolymerizing factor ADF">
    <location>
        <begin position="1"/>
        <end position="118"/>
    </location>
</feature>
<feature type="domain" description="ADF-H" evidence="1">
    <location>
        <begin position="4"/>
        <end position="118"/>
    </location>
</feature>
<feature type="mutagenesis site" description="Significant loss of activity." evidence="2">
    <original>S</original>
    <variation>A</variation>
    <variation>E</variation>
    <location>
        <position position="3"/>
    </location>
</feature>
<feature type="mutagenesis site" description="No significant effects on activity." evidence="2">
    <original>S</original>
    <variation>C</variation>
    <location>
        <position position="3"/>
    </location>
</feature>
<feature type="mutagenesis site" description="No significant effects on activity." evidence="2">
    <original>G</original>
    <variation>R</variation>
    <variation>K</variation>
    <location>
        <position position="66"/>
    </location>
</feature>
<comment type="function">
    <text evidence="2 3 4">Inhibits actin polymerization (PubMed:20042603, PubMed:20433874). Promotes actin depolymerization (PubMed:20042603, PubMed:20433874, PubMed:9274866). Strongly sequesters actin monomers (G-actin) (PubMed:20042603, PubMed:9274866). Weakly severs actin filaments (F-actin) (PubMed:20042603).</text>
</comment>
<comment type="biophysicochemical properties">
    <phDependence>
        <text evidence="2 4">pH-independent.</text>
    </phDependence>
</comment>
<comment type="subunit">
    <text evidence="2 3 4">Interacts with ACT1 (G-actin); the interaction results in inhibition of actin polymerization (PubMed:20042603, PubMed:9274866). Interacts with DPA; the interaction enhances ADF activity in disassembly of filamentous actin and inhibition of actin polymerization (PubMed:20433874).</text>
</comment>
<comment type="subcellular location">
    <subcellularLocation>
        <location evidence="3 4">Cytoplasm</location>
    </subcellularLocation>
</comment>
<comment type="developmental stage">
    <text evidence="3 4">Expressed in bradyzoites (at protein level) (PubMed:20433874). Expressed in extracellular parasites (at protein level) (PubMed:9274866).</text>
</comment>
<comment type="similarity">
    <text evidence="7">Belongs to the actin-binding proteins ADF family.</text>
</comment>
<name>ADF_TOXGO</name>
<reference evidence="8" key="1">
    <citation type="journal article" date="1997" name="Mol. Biochem. Parasitol.">
        <title>Cloning and characterization of actin depolymerizing factor from Toxoplasma gondii.</title>
        <authorList>
            <person name="Allen M.L."/>
            <person name="Dobrowolski J.M."/>
            <person name="Muller H."/>
            <person name="Sibley L.D."/>
            <person name="Mansour T.E."/>
        </authorList>
    </citation>
    <scope>NUCLEOTIDE SEQUENCE [MRNA]</scope>
    <scope>FUNCTION</scope>
    <scope>BIOPHYSICOCHEMICAL PROPERTIES</scope>
    <scope>INTERACTION WITH ACT1</scope>
    <scope>SUBCELLULAR LOCATION</scope>
    <scope>DEVELOPMENTAL STAGE</scope>
    <source>
        <strain evidence="8">RH</strain>
    </source>
</reference>
<reference evidence="7" key="2">
    <citation type="journal article" date="2010" name="J. Biol. Chem.">
        <title>Toxoplasma gondii actin depolymerizing factor acts primarily to sequester G-actin.</title>
        <authorList>
            <person name="Mehta S."/>
            <person name="Sibley L.D."/>
        </authorList>
    </citation>
    <scope>FUNCTION</scope>
    <scope>BIOPHYSICOCHEMICAL PROPERTIES</scope>
    <scope>INTERACTION WITH ACT1</scope>
    <scope>MUTAGENESIS OF SER-3 AND GLY-66</scope>
    <source>
        <strain evidence="5">RH</strain>
    </source>
</reference>
<reference evidence="7" key="3">
    <citation type="journal article" date="2010" name="Mol. Biochem. Parasitol.">
        <title>Toxoplasma gondii deoxyribose phosphate aldolase-like protein (TgDPA) interacts with actin depolymerizing factor (TgADF) to enhance the actin filament dynamics in the bradyzoite stage.</title>
        <authorList>
            <person name="Ueno A."/>
            <person name="Dautu G."/>
            <person name="Saiki E."/>
            <person name="Haga K."/>
            <person name="Igarashi M."/>
        </authorList>
    </citation>
    <scope>FUNCTION</scope>
    <scope>INTERACTION WITH DPA</scope>
    <scope>SUBCELLULAR LOCATION</scope>
    <scope>DEVELOPMENTAL STAGE</scope>
    <source>
        <strain evidence="6">ATCC 50611 / Me49</strain>
        <strain evidence="6">RH</strain>
    </source>
</reference>
<keyword id="KW-0009">Actin-binding</keyword>
<keyword id="KW-0963">Cytoplasm</keyword>
<sequence>MASGMGVDENCVARFNELKIRKTVKWIVFKIENTKIVVEKDGKGNADEFRGALPANDCRFAVYNCGNKIQFVLWCPDNAPVKPRMTYASSKDALLKKLDGATAVALEAHEMGDLAPLA</sequence>
<evidence type="ECO:0000255" key="1">
    <source>
        <dbReference type="PROSITE-ProRule" id="PRU00599"/>
    </source>
</evidence>
<evidence type="ECO:0000269" key="2">
    <source>
    </source>
</evidence>
<evidence type="ECO:0000269" key="3">
    <source>
    </source>
</evidence>
<evidence type="ECO:0000269" key="4">
    <source>
    </source>
</evidence>
<evidence type="ECO:0000303" key="5">
    <source>
    </source>
</evidence>
<evidence type="ECO:0000303" key="6">
    <source>
    </source>
</evidence>
<evidence type="ECO:0000305" key="7"/>
<evidence type="ECO:0000312" key="8">
    <source>
        <dbReference type="EMBL" id="AAC47717.1"/>
    </source>
</evidence>
<protein>
    <recommendedName>
        <fullName evidence="6">Actin depolymerizing factor ADF</fullName>
        <shortName evidence="6">TgADF</shortName>
    </recommendedName>
</protein>
<accession>O15902</accession>
<organism evidence="8">
    <name type="scientific">Toxoplasma gondii</name>
    <dbReference type="NCBI Taxonomy" id="5811"/>
    <lineage>
        <taxon>Eukaryota</taxon>
        <taxon>Sar</taxon>
        <taxon>Alveolata</taxon>
        <taxon>Apicomplexa</taxon>
        <taxon>Conoidasida</taxon>
        <taxon>Coccidia</taxon>
        <taxon>Eucoccidiorida</taxon>
        <taxon>Eimeriorina</taxon>
        <taxon>Sarcocystidae</taxon>
        <taxon>Toxoplasma</taxon>
    </lineage>
</organism>
<gene>
    <name evidence="7" type="primary">ADF</name>
</gene>
<dbReference type="EMBL" id="U62146">
    <property type="protein sequence ID" value="AAC47717.1"/>
    <property type="molecule type" value="mRNA"/>
</dbReference>
<dbReference type="SMR" id="O15902"/>
<dbReference type="VEuPathDB" id="ToxoDB:TGARI_220400"/>
<dbReference type="VEuPathDB" id="ToxoDB:TGCAST_220400"/>
<dbReference type="VEuPathDB" id="ToxoDB:TGCOUG_220400"/>
<dbReference type="VEuPathDB" id="ToxoDB:TGDOM2_220400"/>
<dbReference type="VEuPathDB" id="ToxoDB:TGFOU_220400"/>
<dbReference type="VEuPathDB" id="ToxoDB:TGGT1_220400"/>
<dbReference type="VEuPathDB" id="ToxoDB:TGMAS_220400"/>
<dbReference type="VEuPathDB" id="ToxoDB:TGME49_220400"/>
<dbReference type="VEuPathDB" id="ToxoDB:TGP89_220400"/>
<dbReference type="VEuPathDB" id="ToxoDB:TGPRC2_220400"/>
<dbReference type="VEuPathDB" id="ToxoDB:TGRH88_023730"/>
<dbReference type="VEuPathDB" id="ToxoDB:TGRUB_220400"/>
<dbReference type="VEuPathDB" id="ToxoDB:TGVAND_220400"/>
<dbReference type="VEuPathDB" id="ToxoDB:TGVEG_220400"/>
<dbReference type="GO" id="GO:0015629">
    <property type="term" value="C:actin cytoskeleton"/>
    <property type="evidence" value="ECO:0007669"/>
    <property type="project" value="InterPro"/>
</dbReference>
<dbReference type="GO" id="GO:0005737">
    <property type="term" value="C:cytoplasm"/>
    <property type="evidence" value="ECO:0000314"/>
    <property type="project" value="UniProtKB"/>
</dbReference>
<dbReference type="GO" id="GO:0003789">
    <property type="term" value="F:actin filament severing activity"/>
    <property type="evidence" value="ECO:0000314"/>
    <property type="project" value="UniProtKB"/>
</dbReference>
<dbReference type="GO" id="GO:0003785">
    <property type="term" value="F:actin monomer binding"/>
    <property type="evidence" value="ECO:0000353"/>
    <property type="project" value="UniProtKB"/>
</dbReference>
<dbReference type="GO" id="GO:0140311">
    <property type="term" value="F:protein sequestering activity"/>
    <property type="evidence" value="ECO:0000353"/>
    <property type="project" value="UniProtKB"/>
</dbReference>
<dbReference type="GO" id="GO:0030042">
    <property type="term" value="P:actin filament depolymerization"/>
    <property type="evidence" value="ECO:0000314"/>
    <property type="project" value="UniProtKB"/>
</dbReference>
<dbReference type="GO" id="GO:0030837">
    <property type="term" value="P:negative regulation of actin filament polymerization"/>
    <property type="evidence" value="ECO:0000314"/>
    <property type="project" value="UniProtKB"/>
</dbReference>
<dbReference type="CDD" id="cd11286">
    <property type="entry name" value="ADF_cofilin_like"/>
    <property type="match status" value="1"/>
</dbReference>
<dbReference type="Gene3D" id="3.40.20.10">
    <property type="entry name" value="Severin"/>
    <property type="match status" value="1"/>
</dbReference>
<dbReference type="InterPro" id="IPR002108">
    <property type="entry name" value="ADF-H"/>
</dbReference>
<dbReference type="InterPro" id="IPR029006">
    <property type="entry name" value="ADF-H/Gelsolin-like_dom_sf"/>
</dbReference>
<dbReference type="InterPro" id="IPR017904">
    <property type="entry name" value="ADF/Cofilin"/>
</dbReference>
<dbReference type="PANTHER" id="PTHR11913">
    <property type="entry name" value="COFILIN-RELATED"/>
    <property type="match status" value="1"/>
</dbReference>
<dbReference type="Pfam" id="PF00241">
    <property type="entry name" value="Cofilin_ADF"/>
    <property type="match status" value="1"/>
</dbReference>
<dbReference type="SMART" id="SM00102">
    <property type="entry name" value="ADF"/>
    <property type="match status" value="1"/>
</dbReference>
<dbReference type="SUPFAM" id="SSF55753">
    <property type="entry name" value="Actin depolymerizing proteins"/>
    <property type="match status" value="1"/>
</dbReference>
<dbReference type="PROSITE" id="PS51263">
    <property type="entry name" value="ADF_H"/>
    <property type="match status" value="1"/>
</dbReference>